<gene>
    <name type="primary">virB7</name>
    <name type="ordered locus">Atu6173</name>
    <name type="ORF">AGR_pTi_10.1</name>
</gene>
<organism>
    <name type="scientific">Agrobacterium fabrum (strain C58 / ATCC 33970)</name>
    <name type="common">Agrobacterium tumefaciens (strain C58)</name>
    <dbReference type="NCBI Taxonomy" id="176299"/>
    <lineage>
        <taxon>Bacteria</taxon>
        <taxon>Pseudomonadati</taxon>
        <taxon>Pseudomonadota</taxon>
        <taxon>Alphaproteobacteria</taxon>
        <taxon>Hyphomicrobiales</taxon>
        <taxon>Rhizobiaceae</taxon>
        <taxon>Rhizobium/Agrobacterium group</taxon>
        <taxon>Agrobacterium</taxon>
        <taxon>Agrobacterium tumefaciens complex</taxon>
    </lineage>
</organism>
<reference key="1">
    <citation type="journal article" date="1990" name="Mol. Gen. Genet.">
        <title>The virB operon of Agrobacterium tumefaciens pTiC58 encodes 11 open reading frames.</title>
        <authorList>
            <person name="Kuldau G.A."/>
            <person name="de Vos G."/>
            <person name="Owen J."/>
            <person name="McCaffrey G."/>
            <person name="Zambryski P."/>
        </authorList>
    </citation>
    <scope>NUCLEOTIDE SEQUENCE [GENOMIC DNA]</scope>
</reference>
<reference key="2">
    <citation type="journal article" date="1990" name="Plasmid">
        <title>Molecular characterization of the vir regulon of Agrobacterium tumefaciens: complete nucleotide sequence and gene organization of the 28.63-kbp regulon cloned as a single unit.</title>
        <authorList>
            <person name="Rogowsky P.M."/>
            <person name="Powell B.S."/>
            <person name="Shirasu K."/>
            <person name="Lin T.-S."/>
            <person name="Morel P."/>
            <person name="Zyprian E.M."/>
            <person name="Steck T.R."/>
            <person name="Kado C.I."/>
        </authorList>
    </citation>
    <scope>NUCLEOTIDE SEQUENCE [GENOMIC DNA]</scope>
</reference>
<reference key="3">
    <citation type="journal article" date="1990" name="Mol. Microbiol.">
        <title>Characterization of the virB operon of an Agrobacterium tumefaciens Ti plasmid: nucleotide sequence and protein analysis.</title>
        <authorList>
            <person name="Shirasu K."/>
            <person name="Morel P."/>
            <person name="Kado C.I."/>
        </authorList>
    </citation>
    <scope>NUCLEOTIDE SEQUENCE [GENOMIC DNA]</scope>
</reference>
<reference key="4">
    <citation type="journal article" date="2001" name="Science">
        <title>The genome of the natural genetic engineer Agrobacterium tumefaciens C58.</title>
        <authorList>
            <person name="Wood D.W."/>
            <person name="Setubal J.C."/>
            <person name="Kaul R."/>
            <person name="Monks D.E."/>
            <person name="Kitajima J.P."/>
            <person name="Okura V.K."/>
            <person name="Zhou Y."/>
            <person name="Chen L."/>
            <person name="Wood G.E."/>
            <person name="Almeida N.F. Jr."/>
            <person name="Woo L."/>
            <person name="Chen Y."/>
            <person name="Paulsen I.T."/>
            <person name="Eisen J.A."/>
            <person name="Karp P.D."/>
            <person name="Bovee D. Sr."/>
            <person name="Chapman P."/>
            <person name="Clendenning J."/>
            <person name="Deatherage G."/>
            <person name="Gillet W."/>
            <person name="Grant C."/>
            <person name="Kutyavin T."/>
            <person name="Levy R."/>
            <person name="Li M.-J."/>
            <person name="McClelland E."/>
            <person name="Palmieri A."/>
            <person name="Raymond C."/>
            <person name="Rouse G."/>
            <person name="Saenphimmachak C."/>
            <person name="Wu Z."/>
            <person name="Romero P."/>
            <person name="Gordon D."/>
            <person name="Zhang S."/>
            <person name="Yoo H."/>
            <person name="Tao Y."/>
            <person name="Biddle P."/>
            <person name="Jung M."/>
            <person name="Krespan W."/>
            <person name="Perry M."/>
            <person name="Gordon-Kamm B."/>
            <person name="Liao L."/>
            <person name="Kim S."/>
            <person name="Hendrick C."/>
            <person name="Zhao Z.-Y."/>
            <person name="Dolan M."/>
            <person name="Chumley F."/>
            <person name="Tingey S.V."/>
            <person name="Tomb J.-F."/>
            <person name="Gordon M.P."/>
            <person name="Olson M.V."/>
            <person name="Nester E.W."/>
        </authorList>
    </citation>
    <scope>NUCLEOTIDE SEQUENCE [LARGE SCALE GENOMIC DNA]</scope>
</reference>
<reference key="5">
    <citation type="journal article" date="2001" name="Science">
        <title>Genome sequence of the plant pathogen and biotechnology agent Agrobacterium tumefaciens C58.</title>
        <authorList>
            <person name="Goodner B."/>
            <person name="Hinkle G."/>
            <person name="Gattung S."/>
            <person name="Miller N."/>
            <person name="Blanchard M."/>
            <person name="Qurollo B."/>
            <person name="Goldman B.S."/>
            <person name="Cao Y."/>
            <person name="Askenazi M."/>
            <person name="Halling C."/>
            <person name="Mullin L."/>
            <person name="Houmiel K."/>
            <person name="Gordon J."/>
            <person name="Vaudin M."/>
            <person name="Iartchouk O."/>
            <person name="Epp A."/>
            <person name="Liu F."/>
            <person name="Wollam C."/>
            <person name="Allinger M."/>
            <person name="Doughty D."/>
            <person name="Scott C."/>
            <person name="Lappas C."/>
            <person name="Markelz B."/>
            <person name="Flanagan C."/>
            <person name="Crowell C."/>
            <person name="Gurson J."/>
            <person name="Lomo C."/>
            <person name="Sear C."/>
            <person name="Strub G."/>
            <person name="Cielo C."/>
            <person name="Slater S."/>
        </authorList>
    </citation>
    <scope>NUCLEOTIDE SEQUENCE [LARGE SCALE GENOMIC DNA]</scope>
    <source>
        <strain>C58 / ATCC 33970</strain>
    </source>
</reference>
<protein>
    <recommendedName>
        <fullName>Outer membrane lipoprotein virB7</fullName>
    </recommendedName>
</protein>
<feature type="signal peptide" evidence="2">
    <location>
        <begin position="1"/>
        <end position="14"/>
    </location>
</feature>
<feature type="chain" id="PRO_0000022669" description="Outer membrane lipoprotein virB7">
    <location>
        <begin position="15"/>
        <end position="55"/>
    </location>
</feature>
<feature type="lipid moiety-binding region" description="N-palmitoyl cysteine" evidence="2">
    <location>
        <position position="15"/>
    </location>
</feature>
<feature type="lipid moiety-binding region" description="S-diacylglycerol cysteine" evidence="2">
    <location>
        <position position="15"/>
    </location>
</feature>
<feature type="disulfide bond" description="Interchain (with C-262 in virB9); in heterodimeric form" evidence="1">
    <location>
        <position position="24"/>
    </location>
</feature>
<feature type="disulfide bond" description="Interchain; in homodimeric form" evidence="1">
    <location>
        <position position="24"/>
    </location>
</feature>
<feature type="sequence conflict" description="In Ref. 2 and 3." evidence="3" ref="2 3">
    <original>G</original>
    <variation>S</variation>
    <location>
        <position position="13"/>
    </location>
</feature>
<geneLocation type="plasmid">
    <name>pTiC58</name>
</geneLocation>
<accession>P17797</accession>
<proteinExistence type="inferred from homology"/>
<comment type="function">
    <text evidence="1">Is essential for the biogenesis of the T-pilus, which is required for virulence and T-DNA transfer to plant cells. When is associated with virB9, might function as a nucleation center for recruitment of VirB proteins during assembly of the T-DNA transfer machine (By similarity).</text>
</comment>
<comment type="subunit">
    <text evidence="1">Homodimer and heterodimer of virB7 and virB9; disulfide-linked.</text>
</comment>
<comment type="subcellular location">
    <subcellularLocation>
        <location>Cell outer membrane</location>
        <topology>Lipid-anchor</topology>
    </subcellularLocation>
    <text evidence="1">Also associated with the T-pilus when is a homodimer, possibly at the pilus base.</text>
</comment>
<dbReference type="EMBL" id="X53264">
    <property type="protein sequence ID" value="CAA37360.1"/>
    <property type="molecule type" value="Genomic_DNA"/>
</dbReference>
<dbReference type="EMBL" id="J03320">
    <property type="protein sequence ID" value="AAA91597.1"/>
    <property type="molecule type" value="Genomic_DNA"/>
</dbReference>
<dbReference type="EMBL" id="AE007871">
    <property type="protein sequence ID" value="AAL46409.1"/>
    <property type="molecule type" value="Genomic_DNA"/>
</dbReference>
<dbReference type="PIR" id="AC3249">
    <property type="entry name" value="AC3249"/>
</dbReference>
<dbReference type="PIR" id="S12347">
    <property type="entry name" value="B7AG58"/>
</dbReference>
<dbReference type="RefSeq" id="NP_536093.1">
    <property type="nucleotide sequence ID" value="NC_003065.3"/>
</dbReference>
<dbReference type="RefSeq" id="WP_010891497.1">
    <property type="nucleotide sequence ID" value="NC_003065.3"/>
</dbReference>
<dbReference type="IntAct" id="P17797">
    <property type="interactions" value="1"/>
</dbReference>
<dbReference type="EnsemblBacteria" id="AAL46409">
    <property type="protein sequence ID" value="AAL46409"/>
    <property type="gene ID" value="Atu6173"/>
</dbReference>
<dbReference type="GeneID" id="86882428"/>
<dbReference type="KEGG" id="atu:Atu6173"/>
<dbReference type="HOGENOM" id="CLU_3021583_0_0_5"/>
<dbReference type="OrthoDB" id="7284987at2"/>
<dbReference type="BioCyc" id="AGRO:ATU6173-MONOMER"/>
<dbReference type="Proteomes" id="UP000000813">
    <property type="component" value="Plasmid Ti"/>
</dbReference>
<dbReference type="GO" id="GO:0009279">
    <property type="term" value="C:cell outer membrane"/>
    <property type="evidence" value="ECO:0007669"/>
    <property type="project" value="UniProtKB-SubCell"/>
</dbReference>
<dbReference type="GO" id="GO:0043684">
    <property type="term" value="C:type IV secretion system complex"/>
    <property type="evidence" value="ECO:0000317"/>
    <property type="project" value="PAMGO_GAT"/>
</dbReference>
<dbReference type="GO" id="GO:0030255">
    <property type="term" value="P:protein secretion by the type IV secretion system"/>
    <property type="evidence" value="ECO:0000317"/>
    <property type="project" value="PAMGO_GAT"/>
</dbReference>
<dbReference type="InterPro" id="IPR035545">
    <property type="entry name" value="VirB7"/>
</dbReference>
<dbReference type="NCBIfam" id="NF010433">
    <property type="entry name" value="PRK13859.1"/>
    <property type="match status" value="1"/>
</dbReference>
<dbReference type="Pfam" id="PF17413">
    <property type="entry name" value="VirB7"/>
    <property type="match status" value="1"/>
</dbReference>
<dbReference type="PROSITE" id="PS51257">
    <property type="entry name" value="PROKAR_LIPOPROTEIN"/>
    <property type="match status" value="1"/>
</dbReference>
<name>VIRB7_AGRFC</name>
<evidence type="ECO:0000250" key="1"/>
<evidence type="ECO:0000255" key="2">
    <source>
        <dbReference type="PROSITE-ProRule" id="PRU00303"/>
    </source>
</evidence>
<evidence type="ECO:0000305" key="3"/>
<keyword id="KW-0998">Cell outer membrane</keyword>
<keyword id="KW-0192">Crown gall tumor</keyword>
<keyword id="KW-1015">Disulfide bond</keyword>
<keyword id="KW-0449">Lipoprotein</keyword>
<keyword id="KW-0472">Membrane</keyword>
<keyword id="KW-0564">Palmitate</keyword>
<keyword id="KW-0614">Plasmid</keyword>
<keyword id="KW-1185">Reference proteome</keyword>
<keyword id="KW-0732">Signal</keyword>
<keyword id="KW-0843">Virulence</keyword>
<sequence>MKYCLLCLALALGGCQTNDKLASCKGPIFPLNVGRWQPTPSDLQLSNVGGRHEGV</sequence>